<reference key="1">
    <citation type="journal article" date="2004" name="Proc. Natl. Acad. Sci. U.S.A.">
        <title>The diploid genome sequence of Candida albicans.</title>
        <authorList>
            <person name="Jones T."/>
            <person name="Federspiel N.A."/>
            <person name="Chibana H."/>
            <person name="Dungan J."/>
            <person name="Kalman S."/>
            <person name="Magee B.B."/>
            <person name="Newport G."/>
            <person name="Thorstenson Y.R."/>
            <person name="Agabian N."/>
            <person name="Magee P.T."/>
            <person name="Davis R.W."/>
            <person name="Scherer S."/>
        </authorList>
    </citation>
    <scope>NUCLEOTIDE SEQUENCE [LARGE SCALE GENOMIC DNA]</scope>
    <source>
        <strain>SC5314 / ATCC MYA-2876</strain>
    </source>
</reference>
<reference key="2">
    <citation type="journal article" date="2007" name="Genome Biol.">
        <title>Assembly of the Candida albicans genome into sixteen supercontigs aligned on the eight chromosomes.</title>
        <authorList>
            <person name="van het Hoog M."/>
            <person name="Rast T.J."/>
            <person name="Martchenko M."/>
            <person name="Grindle S."/>
            <person name="Dignard D."/>
            <person name="Hogues H."/>
            <person name="Cuomo C."/>
            <person name="Berriman M."/>
            <person name="Scherer S."/>
            <person name="Magee B.B."/>
            <person name="Whiteway M."/>
            <person name="Chibana H."/>
            <person name="Nantel A."/>
            <person name="Magee P.T."/>
        </authorList>
    </citation>
    <scope>GENOME REANNOTATION</scope>
    <source>
        <strain>SC5314 / ATCC MYA-2876</strain>
    </source>
</reference>
<reference key="3">
    <citation type="journal article" date="2013" name="Genome Biol.">
        <title>Assembly of a phased diploid Candida albicans genome facilitates allele-specific measurements and provides a simple model for repeat and indel structure.</title>
        <authorList>
            <person name="Muzzey D."/>
            <person name="Schwartz K."/>
            <person name="Weissman J.S."/>
            <person name="Sherlock G."/>
        </authorList>
    </citation>
    <scope>NUCLEOTIDE SEQUENCE [LARGE SCALE GENOMIC DNA]</scope>
    <scope>GENOME REANNOTATION</scope>
    <source>
        <strain>SC5314 / ATCC MYA-2876</strain>
    </source>
</reference>
<protein>
    <recommendedName>
        <fullName>2',3'-cyclic-nucleotide 3'-phosphodiesterase</fullName>
        <shortName>CPDase</shortName>
        <ecNumber>3.1.4.37</ecNumber>
    </recommendedName>
</protein>
<sequence length="246" mass="28220">MGVALWLCPKRNTPTYDKLITVMSSLNTLFPGSPPKFEPHITITTNISLDLADQSKTKDDVDRILSASAVAMNSLPKNHESLVKLGNVNSQRKFFKKLYFEVEKDPNLVSFARIIRELFVIVPQDIEKENIKQNPQLYTKDNNGNTIRRKPSKKKSKTTEVKEFDTSFIRQAAAYKAAEWSVQEFDPHISLVYSDLWPLHSALWRNINTRISDIDWDIEWEFGVLKLVLCEGDVNDWVVLGSVDIH</sequence>
<proteinExistence type="inferred from homology"/>
<dbReference type="EC" id="3.1.4.37"/>
<dbReference type="EMBL" id="CP017630">
    <property type="protein sequence ID" value="AOW31366.1"/>
    <property type="molecule type" value="Genomic_DNA"/>
</dbReference>
<dbReference type="RefSeq" id="XP_019331093.1">
    <property type="nucleotide sequence ID" value="XM_019475548.1"/>
</dbReference>
<dbReference type="FunCoup" id="Q59PZ7">
    <property type="interactions" value="14"/>
</dbReference>
<dbReference type="STRING" id="237561.Q59PZ7"/>
<dbReference type="EnsemblFungi" id="CR_06690C_A-T">
    <property type="protein sequence ID" value="CR_06690C_A-T-p1"/>
    <property type="gene ID" value="CR_06690C_A"/>
</dbReference>
<dbReference type="GeneID" id="3646624"/>
<dbReference type="KEGG" id="cal:CAALFM_CR06690CA"/>
<dbReference type="CGD" id="CAL0000174269">
    <property type="gene designation" value="orf19.8322"/>
</dbReference>
<dbReference type="VEuPathDB" id="FungiDB:CR_06690C_A"/>
<dbReference type="eggNOG" id="ENOG502RY6J">
    <property type="taxonomic scope" value="Eukaryota"/>
</dbReference>
<dbReference type="HOGENOM" id="CLU_088289_0_0_1"/>
<dbReference type="InParanoid" id="Q59PZ7"/>
<dbReference type="OMA" id="FEPHITI"/>
<dbReference type="OrthoDB" id="514292at2759"/>
<dbReference type="PRO" id="PR:Q59PZ7"/>
<dbReference type="Proteomes" id="UP000000559">
    <property type="component" value="Chromosome R"/>
</dbReference>
<dbReference type="GO" id="GO:0005794">
    <property type="term" value="C:Golgi apparatus"/>
    <property type="evidence" value="ECO:0007669"/>
    <property type="project" value="UniProtKB-SubCell"/>
</dbReference>
<dbReference type="GO" id="GO:0004113">
    <property type="term" value="F:2',3'-cyclic-nucleotide 3'-phosphodiesterase activity"/>
    <property type="evidence" value="ECO:0000318"/>
    <property type="project" value="GO_Central"/>
</dbReference>
<dbReference type="GO" id="GO:0009187">
    <property type="term" value="P:cyclic nucleotide metabolic process"/>
    <property type="evidence" value="ECO:0000318"/>
    <property type="project" value="GO_Central"/>
</dbReference>
<dbReference type="Gene3D" id="3.90.1140.10">
    <property type="entry name" value="Cyclic phosphodiesterase"/>
    <property type="match status" value="1"/>
</dbReference>
<dbReference type="InterPro" id="IPR012386">
    <property type="entry name" value="Cyclic-nucl_3Pdiesterase"/>
</dbReference>
<dbReference type="InterPro" id="IPR009097">
    <property type="entry name" value="Cyclic_Pdiesterase"/>
</dbReference>
<dbReference type="PANTHER" id="PTHR28141">
    <property type="entry name" value="2',3'-CYCLIC-NUCLEOTIDE 3'-PHOSPHODIESTERASE"/>
    <property type="match status" value="1"/>
</dbReference>
<dbReference type="PANTHER" id="PTHR28141:SF1">
    <property type="entry name" value="2',3'-CYCLIC-NUCLEOTIDE 3'-PHOSPHODIESTERASE"/>
    <property type="match status" value="1"/>
</dbReference>
<dbReference type="Pfam" id="PF07823">
    <property type="entry name" value="CPDase"/>
    <property type="match status" value="1"/>
</dbReference>
<dbReference type="SUPFAM" id="SSF55144">
    <property type="entry name" value="LigT-like"/>
    <property type="match status" value="1"/>
</dbReference>
<keyword id="KW-0333">Golgi apparatus</keyword>
<keyword id="KW-0378">Hydrolase</keyword>
<keyword id="KW-1185">Reference proteome</keyword>
<name>CPD1_CANAL</name>
<organism>
    <name type="scientific">Candida albicans (strain SC5314 / ATCC MYA-2876)</name>
    <name type="common">Yeast</name>
    <dbReference type="NCBI Taxonomy" id="237561"/>
    <lineage>
        <taxon>Eukaryota</taxon>
        <taxon>Fungi</taxon>
        <taxon>Dikarya</taxon>
        <taxon>Ascomycota</taxon>
        <taxon>Saccharomycotina</taxon>
        <taxon>Pichiomycetes</taxon>
        <taxon>Debaryomycetaceae</taxon>
        <taxon>Candida/Lodderomyces clade</taxon>
        <taxon>Candida</taxon>
    </lineage>
</organism>
<gene>
    <name type="primary">CPD1</name>
    <name type="ordered locus">CAALFM_CR06690CA</name>
    <name type="ORF">CaO19.703</name>
    <name type="ORF">CaO19.8322</name>
</gene>
<evidence type="ECO:0000250" key="1"/>
<evidence type="ECO:0000256" key="2">
    <source>
        <dbReference type="SAM" id="MobiDB-lite"/>
    </source>
</evidence>
<evidence type="ECO:0000305" key="3"/>
<feature type="chain" id="PRO_0000280675" description="2',3'-cyclic-nucleotide 3'-phosphodiesterase">
    <location>
        <begin position="1"/>
        <end position="246"/>
    </location>
</feature>
<feature type="region of interest" description="Disordered" evidence="2">
    <location>
        <begin position="133"/>
        <end position="159"/>
    </location>
</feature>
<feature type="compositionally biased region" description="Polar residues" evidence="2">
    <location>
        <begin position="133"/>
        <end position="146"/>
    </location>
</feature>
<feature type="compositionally biased region" description="Basic residues" evidence="2">
    <location>
        <begin position="147"/>
        <end position="156"/>
    </location>
</feature>
<feature type="active site" description="Proton donor/acceptor" evidence="1">
    <location>
        <position position="40"/>
    </location>
</feature>
<feature type="active site" description="Proton donor/acceptor" evidence="1">
    <location>
        <position position="188"/>
    </location>
</feature>
<feature type="binding site" evidence="1">
    <location>
        <position position="42"/>
    </location>
    <ligand>
        <name>substrate</name>
    </ligand>
</feature>
<feature type="binding site" evidence="1">
    <location>
        <position position="190"/>
    </location>
    <ligand>
        <name>substrate</name>
    </ligand>
</feature>
<feature type="binding site" evidence="1">
    <location>
        <position position="193"/>
    </location>
    <ligand>
        <name>substrate</name>
    </ligand>
</feature>
<accession>Q59PZ7</accession>
<accession>A0A1D8PTB3</accession>
<comment type="function">
    <text evidence="1">Involved in the metabolism of ADP-ribose 1',2'-cyclic phosphate which is produced as a consequence of tRNA splicing.</text>
</comment>
<comment type="catalytic activity">
    <reaction>
        <text>a nucleoside 2',3'-cyclic phosphate + H2O = a nucleoside 2'-phosphate + H(+)</text>
        <dbReference type="Rhea" id="RHEA:14489"/>
        <dbReference type="ChEBI" id="CHEBI:15377"/>
        <dbReference type="ChEBI" id="CHEBI:15378"/>
        <dbReference type="ChEBI" id="CHEBI:66954"/>
        <dbReference type="ChEBI" id="CHEBI:78552"/>
        <dbReference type="EC" id="3.1.4.37"/>
    </reaction>
</comment>
<comment type="subcellular location">
    <subcellularLocation>
        <location evidence="1">Golgi apparatus</location>
    </subcellularLocation>
</comment>
<comment type="similarity">
    <text evidence="3">Belongs to the 2H phosphoesterase superfamily. CPD1 family.</text>
</comment>